<reference key="1">
    <citation type="journal article" date="1985" name="Virus Res.">
        <title>Nucleotide sequence of the entire protein coding region of canine distemper virus polymerase-associated (P) protein mRNA.</title>
        <authorList>
            <person name="Barrett T."/>
            <person name="Shrimpton S.B."/>
            <person name="Russell S.E.H."/>
        </authorList>
    </citation>
    <scope>NUCLEOTIDE SEQUENCE [GENOMIC RNA]</scope>
</reference>
<gene>
    <name type="primary">P/V</name>
</gene>
<comment type="function">
    <text evidence="2 4">Essential cofactor of the RNA polymerase L that plays a central role in the transcription and replication by forming the polymerase complex with RNA polymerase L and recruiting L to the genomic N-RNA template for RNA synthesis (By similarity). Also plays a central role in the encapsidation of nascent RNA chains by forming the encapsidation complex with the nucleocapsid protein N (N-P complex). Acts as a chaperone for newly synthesized free N protein, so-called N0, allowing encapsidation of nascent RNA chains during replication (By similarity). The nucleoprotein protein N prevents excessive phosphorylation of P, which leads to down-regulation of viral transcription/ replication. Participates, together with N, in the formation of viral factories (viroplasms), which are large inclusions in the host cytoplasm where replication takes place (By similarity).</text>
</comment>
<comment type="subunit">
    <text evidence="2 4">Homotetramer. Interacts (via multimerization domain) with polymerase L; this interaction forms the polymerase L-P complex (By similarity). Interacts (via N-terminus) with N0 (via Ncore); this interaction allows P to chaperon N0 to avoid N polymerization before encapsidation. Interacts (via C-terminus) with N-RNA template; this interaction positions the polymerase on the template for both transcription and replication (By similarity).</text>
</comment>
<comment type="domain">
    <text evidence="1 2 4">The N-terminus consists of a long intrinsically disordered tail. The central part contains the coiled-coil multimerization domain (PMD) (By similarity). Forms a four-stranded coiled coil structure (By similarity). The C-terminus constitutes the alpha-helical domain that binds to the nucleocapsid (N-RNA complex) (By similarity).</text>
</comment>
<comment type="PTM">
    <text evidence="4">Phosphorylation on serines by host CK2 is necessary for the formation of viral factories.</text>
</comment>
<comment type="RNA editing" locationType="Undetermined">
    <text evidence="3">Partially edited. RNA editing at this position consists of an insertion of one guanine nucleotide. The sequence displayed here is the P protein, derived from the unedited RNA. The edited RNA gives rise to the V protein.</text>
</comment>
<comment type="similarity">
    <text evidence="7">Belongs to the morbillivirus P protein family.</text>
</comment>
<evidence type="ECO:0000250" key="1">
    <source>
        <dbReference type="UniProtKB" id="P04859"/>
    </source>
</evidence>
<evidence type="ECO:0000250" key="2">
    <source>
        <dbReference type="UniProtKB" id="P06162"/>
    </source>
</evidence>
<evidence type="ECO:0000250" key="3">
    <source>
        <dbReference type="UniProtKB" id="P06163"/>
    </source>
</evidence>
<evidence type="ECO:0000250" key="4">
    <source>
        <dbReference type="UniProtKB" id="Q77M42"/>
    </source>
</evidence>
<evidence type="ECO:0000255" key="5"/>
<evidence type="ECO:0000256" key="6">
    <source>
        <dbReference type="SAM" id="MobiDB-lite"/>
    </source>
</evidence>
<evidence type="ECO:0000305" key="7"/>
<sequence>MAEEQAYHVSKGLECLKALRENPPDIEEIQEVSSLRDQTCNPGQENGTTGMQEEEDSQNLDESHEPTKGSNYVGHVPQNNPGCGERNTALVEAERPPREDIQPGPGIRCDHVYDHSGEEVKGIEDADSLVVPAGTVGNRGFERGEGSLDDSTEDSGEDYSEGNASSNWGYSFGLKPDRAADVSMLMEEELSALLRTSRNVGIQKRDGKTLQFPHNPEVRQGIRSVDPLKRGTEERSVSHGMGIVAGSTSGATQSALKSTGGSSEPSVSAGNVRQPAMNAKMTQKCKLESGTQLPPRTSNEAESDSEYDDELFSEIQEIRSAITKLTEDNQAILTKLDTLLLLKGETDSIKKQISKQNIAISTIEGHLSSIMIAIPGFGKDTGDPTANVDINPELRPIIGRDSGRPLAEVLKQPASSRGNRKDSGITLGSKGQLLRDLQLKPIDKESSSAIGYKPKDTAPSKAVLASLIRSSRVDQSHKHNMLALLKNIKGDDNLNEFYQMVKSITHA</sequence>
<proteinExistence type="inferred from homology"/>
<dbReference type="EMBL" id="M32418">
    <property type="protein sequence ID" value="AAA42880.1"/>
    <property type="molecule type" value="Genomic_RNA"/>
</dbReference>
<dbReference type="EMBL" id="X51869">
    <property type="protein sequence ID" value="CAA36158.1"/>
    <property type="molecule type" value="Genomic_RNA"/>
</dbReference>
<dbReference type="PIR" id="B23778">
    <property type="entry name" value="RRNZCV"/>
</dbReference>
<dbReference type="SMR" id="P06940"/>
<dbReference type="GO" id="GO:0003723">
    <property type="term" value="F:RNA binding"/>
    <property type="evidence" value="ECO:0007669"/>
    <property type="project" value="InterPro"/>
</dbReference>
<dbReference type="GO" id="GO:0003968">
    <property type="term" value="F:RNA-directed RNA polymerase activity"/>
    <property type="evidence" value="ECO:0007669"/>
    <property type="project" value="InterPro"/>
</dbReference>
<dbReference type="GO" id="GO:0006351">
    <property type="term" value="P:DNA-templated transcription"/>
    <property type="evidence" value="ECO:0007669"/>
    <property type="project" value="InterPro"/>
</dbReference>
<dbReference type="GO" id="GO:0019079">
    <property type="term" value="P:viral genome replication"/>
    <property type="evidence" value="ECO:0007669"/>
    <property type="project" value="InterPro"/>
</dbReference>
<dbReference type="CDD" id="cd21031">
    <property type="entry name" value="MEV_P-protein-C_like"/>
    <property type="match status" value="1"/>
</dbReference>
<dbReference type="Gene3D" id="1.20.5.110">
    <property type="match status" value="1"/>
</dbReference>
<dbReference type="Gene3D" id="1.10.8.10">
    <property type="entry name" value="DNA helicase RuvA subunit, C-terminal domain"/>
    <property type="match status" value="1"/>
</dbReference>
<dbReference type="InterPro" id="IPR004897">
    <property type="entry name" value="P/V_Pprotein_paramyxoviral"/>
</dbReference>
<dbReference type="InterPro" id="IPR028243">
    <property type="entry name" value="Paramyxo_P/V_N"/>
</dbReference>
<dbReference type="InterPro" id="IPR016075">
    <property type="entry name" value="RNA_pol_Pprot-P_XD_paramyxovir"/>
</dbReference>
<dbReference type="Pfam" id="PF03210">
    <property type="entry name" value="Paramyx_P_V_C"/>
    <property type="match status" value="1"/>
</dbReference>
<dbReference type="Pfam" id="PF13825">
    <property type="entry name" value="Paramyxo_P_V_N"/>
    <property type="match status" value="1"/>
</dbReference>
<dbReference type="SUPFAM" id="SSF101089">
    <property type="entry name" value="Phosphoprotein XD domain"/>
    <property type="match status" value="1"/>
</dbReference>
<organism>
    <name type="scientific">Canine distemper virus (strain Onderstepoort)</name>
    <name type="common">CDV</name>
    <dbReference type="NCBI Taxonomy" id="11233"/>
    <lineage>
        <taxon>Viruses</taxon>
        <taxon>Riboviria</taxon>
        <taxon>Orthornavirae</taxon>
        <taxon>Negarnaviricota</taxon>
        <taxon>Haploviricotina</taxon>
        <taxon>Monjiviricetes</taxon>
        <taxon>Mononegavirales</taxon>
        <taxon>Paramyxoviridae</taxon>
        <taxon>Orthoparamyxovirinae</taxon>
        <taxon>Morbillivirus</taxon>
        <taxon>Morbillivirus canis</taxon>
    </lineage>
</organism>
<organismHost>
    <name type="scientific">Ailuropoda melanoleuca</name>
    <name type="common">Giant panda</name>
    <dbReference type="NCBI Taxonomy" id="9646"/>
</organismHost>
<organismHost>
    <name type="scientific">Ailurus fulgens</name>
    <name type="common">Himalayan red panda</name>
    <dbReference type="NCBI Taxonomy" id="9649"/>
</organismHost>
<organismHost>
    <name type="scientific">Canis lupus familiaris</name>
    <name type="common">Dog</name>
    <name type="synonym">Canis familiaris</name>
    <dbReference type="NCBI Taxonomy" id="9615"/>
</organismHost>
<organismHost>
    <name type="scientific">Mustela</name>
    <dbReference type="NCBI Taxonomy" id="9665"/>
</organismHost>
<organismHost>
    <name type="scientific">Panthera leo</name>
    <name type="common">Lion</name>
    <dbReference type="NCBI Taxonomy" id="9689"/>
</organismHost>
<organismHost>
    <name type="scientific">Procyon lotor</name>
    <name type="common">Raccoon</name>
    <dbReference type="NCBI Taxonomy" id="9654"/>
</organismHost>
<organismHost>
    <name type="scientific">Zalophus californianus</name>
    <name type="common">California sealion</name>
    <dbReference type="NCBI Taxonomy" id="9704"/>
</organismHost>
<name>PHOSP_CDVO</name>
<feature type="chain" id="PRO_0000142688" description="Phosphoprotein">
    <location>
        <begin position="1"/>
        <end position="507"/>
    </location>
</feature>
<feature type="region of interest" description="Disordered" evidence="6">
    <location>
        <begin position="31"/>
        <end position="86"/>
    </location>
</feature>
<feature type="region of interest" description="Disordered" evidence="6">
    <location>
        <begin position="123"/>
        <end position="172"/>
    </location>
</feature>
<feature type="region of interest" description="Disordered" evidence="6">
    <location>
        <begin position="242"/>
        <end position="307"/>
    </location>
</feature>
<feature type="region of interest" description="Multimerization" evidence="4">
    <location>
        <begin position="304"/>
        <end position="376"/>
    </location>
</feature>
<feature type="region of interest" description="Interaction with the nucleocapsid (N-RNA)" evidence="4">
    <location>
        <begin position="459"/>
        <end position="507"/>
    </location>
</feature>
<feature type="coiled-coil region" evidence="5">
    <location>
        <begin position="310"/>
        <end position="339"/>
    </location>
</feature>
<feature type="compositionally biased region" description="Polar residues" evidence="6">
    <location>
        <begin position="31"/>
        <end position="51"/>
    </location>
</feature>
<feature type="compositionally biased region" description="Acidic residues" evidence="6">
    <location>
        <begin position="147"/>
        <end position="160"/>
    </location>
</feature>
<feature type="compositionally biased region" description="Polar residues" evidence="6">
    <location>
        <begin position="246"/>
        <end position="271"/>
    </location>
</feature>
<feature type="compositionally biased region" description="Polar residues" evidence="6">
    <location>
        <begin position="289"/>
        <end position="300"/>
    </location>
</feature>
<feature type="modified residue" description="Phosphoserine" evidence="4">
    <location>
        <position position="151"/>
    </location>
</feature>
<protein>
    <recommendedName>
        <fullName>Phosphoprotein</fullName>
        <shortName>Protein P</shortName>
    </recommendedName>
</protein>
<accession>P06940</accession>
<keyword id="KW-0175">Coiled coil</keyword>
<keyword id="KW-0597">Phosphoprotein</keyword>
<keyword id="KW-0691">RNA editing</keyword>
<keyword id="KW-0693">Viral RNA replication</keyword>